<dbReference type="EMBL" id="U82664">
    <property type="protein sequence ID" value="AAB40255.1"/>
    <property type="status" value="ALT_INIT"/>
    <property type="molecule type" value="Genomic_DNA"/>
</dbReference>
<dbReference type="EMBL" id="U00096">
    <property type="protein sequence ID" value="AYC08181.1"/>
    <property type="molecule type" value="Genomic_DNA"/>
</dbReference>
<dbReference type="EMBL" id="AP009048">
    <property type="protein sequence ID" value="BAE76280.1"/>
    <property type="molecule type" value="Genomic_DNA"/>
</dbReference>
<dbReference type="PIR" id="C90699">
    <property type="entry name" value="C90699"/>
</dbReference>
<dbReference type="PIR" id="E64781">
    <property type="entry name" value="E64781"/>
</dbReference>
<dbReference type="PIR" id="F85549">
    <property type="entry name" value="F85549"/>
</dbReference>
<dbReference type="SMR" id="P77688"/>
<dbReference type="BioGRID" id="4259869">
    <property type="interactions" value="178"/>
</dbReference>
<dbReference type="DIP" id="DIP-48217N"/>
<dbReference type="FunCoup" id="P77688">
    <property type="interactions" value="70"/>
</dbReference>
<dbReference type="EnsemblBacteria" id="AYC08181">
    <property type="protein sequence ID" value="AYC08181"/>
    <property type="gene ID" value="b0502"/>
</dbReference>
<dbReference type="KEGG" id="ecj:JW5880"/>
<dbReference type="KEGG" id="ecoc:C3026_02465"/>
<dbReference type="PATRIC" id="fig|1411691.4.peg.1775"/>
<dbReference type="eggNOG" id="COG2801">
    <property type="taxonomic scope" value="Bacteria"/>
</dbReference>
<dbReference type="HOGENOM" id="CLU_067821_0_1_6"/>
<dbReference type="InParanoid" id="P77688"/>
<dbReference type="OMA" id="VSRDPFY"/>
<dbReference type="PhylomeDB" id="P77688"/>
<dbReference type="BioCyc" id="EcoCyc:G6273-MONOMER"/>
<dbReference type="PRO" id="PR:P77688"/>
<dbReference type="Proteomes" id="UP000000625">
    <property type="component" value="Chromosome"/>
</dbReference>
<dbReference type="InterPro" id="IPR009057">
    <property type="entry name" value="Homeodomain-like_sf"/>
</dbReference>
<dbReference type="Pfam" id="PF13551">
    <property type="entry name" value="HTH_29"/>
    <property type="match status" value="1"/>
</dbReference>
<dbReference type="SUPFAM" id="SSF46689">
    <property type="entry name" value="Homeodomain-like"/>
    <property type="match status" value="1"/>
</dbReference>
<name>YLBG_ECOLI</name>
<proteinExistence type="predicted"/>
<accession>P77688</accession>
<accession>A0A385XM33</accession>
<accession>Q2MBS6</accession>
<accession>Q79BC9</accession>
<organism>
    <name type="scientific">Escherichia coli (strain K12)</name>
    <dbReference type="NCBI Taxonomy" id="83333"/>
    <lineage>
        <taxon>Bacteria</taxon>
        <taxon>Pseudomonadati</taxon>
        <taxon>Pseudomonadota</taxon>
        <taxon>Gammaproteobacteria</taxon>
        <taxon>Enterobacterales</taxon>
        <taxon>Enterobacteriaceae</taxon>
        <taxon>Escherichia</taxon>
    </lineage>
</organism>
<reference key="1">
    <citation type="submission" date="1997-01" db="EMBL/GenBank/DDBJ databases">
        <title>Sequence of minutes 4-25 of Escherichia coli.</title>
        <authorList>
            <person name="Chung E."/>
            <person name="Allen E."/>
            <person name="Araujo R."/>
            <person name="Aparicio A.M."/>
            <person name="Davis K."/>
            <person name="Duncan M."/>
            <person name="Federspiel N."/>
            <person name="Hyman R."/>
            <person name="Kalman S."/>
            <person name="Komp C."/>
            <person name="Kurdi O."/>
            <person name="Lew H."/>
            <person name="Lin D."/>
            <person name="Namath A."/>
            <person name="Oefner P."/>
            <person name="Roberts D."/>
            <person name="Schramm S."/>
            <person name="Davis R.W."/>
        </authorList>
    </citation>
    <scope>NUCLEOTIDE SEQUENCE [LARGE SCALE GENOMIC DNA]</scope>
    <source>
        <strain>K12 / MG1655 / ATCC 47076</strain>
    </source>
</reference>
<reference key="2">
    <citation type="journal article" date="1997" name="Science">
        <title>The complete genome sequence of Escherichia coli K-12.</title>
        <authorList>
            <person name="Blattner F.R."/>
            <person name="Plunkett G. III"/>
            <person name="Bloch C.A."/>
            <person name="Perna N.T."/>
            <person name="Burland V."/>
            <person name="Riley M."/>
            <person name="Collado-Vides J."/>
            <person name="Glasner J.D."/>
            <person name="Rode C.K."/>
            <person name="Mayhew G.F."/>
            <person name="Gregor J."/>
            <person name="Davis N.W."/>
            <person name="Kirkpatrick H.A."/>
            <person name="Goeden M.A."/>
            <person name="Rose D.J."/>
            <person name="Mau B."/>
            <person name="Shao Y."/>
        </authorList>
    </citation>
    <scope>NUCLEOTIDE SEQUENCE [LARGE SCALE GENOMIC DNA]</scope>
    <source>
        <strain>K12 / MG1655 / ATCC 47076</strain>
    </source>
</reference>
<reference key="3">
    <citation type="journal article" date="2006" name="Mol. Syst. Biol.">
        <title>Highly accurate genome sequences of Escherichia coli K-12 strains MG1655 and W3110.</title>
        <authorList>
            <person name="Hayashi K."/>
            <person name="Morooka N."/>
            <person name="Yamamoto Y."/>
            <person name="Fujita K."/>
            <person name="Isono K."/>
            <person name="Choi S."/>
            <person name="Ohtsubo E."/>
            <person name="Baba T."/>
            <person name="Wanner B.L."/>
            <person name="Mori H."/>
            <person name="Horiuchi T."/>
        </authorList>
    </citation>
    <scope>NUCLEOTIDE SEQUENCE [LARGE SCALE GENOMIC DNA]</scope>
    <source>
        <strain>K12 / W3110 / ATCC 27325 / DSM 5911</strain>
    </source>
</reference>
<sequence length="123" mass="13916">MLHTANPVIKHKAGLLNLAEELSNVSKACKIMGVSRDTFYRYRELVAEGGVDAQINRSRRAPNLKNRTDEATEQAVVDYAVAFPTHGQHRASNELRKQGVFISDSGVRSVWLLHNLENLKRRY</sequence>
<evidence type="ECO:0000305" key="1"/>
<gene>
    <name type="primary">ylbG</name>
    <name type="ordered locus">b0502</name>
    <name type="ordered locus">JW5880</name>
</gene>
<comment type="miscellaneous">
    <text evidence="1">May be missing up to 225 C-terminal residues compared to orthologs.</text>
</comment>
<comment type="sequence caution" evidence="1">
    <conflict type="erroneous initiation">
        <sequence resource="EMBL-CDS" id="AAB40255"/>
    </conflict>
    <text>Extended N-terminus.</text>
</comment>
<protein>
    <recommendedName>
        <fullName>Protein YlbG</fullName>
    </recommendedName>
</protein>
<keyword id="KW-1185">Reference proteome</keyword>
<feature type="chain" id="PRO_0000248934" description="Protein YlbG">
    <location>
        <begin position="1"/>
        <end position="123"/>
    </location>
</feature>